<organism>
    <name type="scientific">Burkholderia mallei (strain ATCC 23344)</name>
    <dbReference type="NCBI Taxonomy" id="243160"/>
    <lineage>
        <taxon>Bacteria</taxon>
        <taxon>Pseudomonadati</taxon>
        <taxon>Pseudomonadota</taxon>
        <taxon>Betaproteobacteria</taxon>
        <taxon>Burkholderiales</taxon>
        <taxon>Burkholderiaceae</taxon>
        <taxon>Burkholderia</taxon>
        <taxon>pseudomallei group</taxon>
    </lineage>
</organism>
<dbReference type="EMBL" id="CP000010">
    <property type="protein sequence ID" value="AAU49353.1"/>
    <property type="molecule type" value="Genomic_DNA"/>
</dbReference>
<dbReference type="RefSeq" id="WP_004193484.1">
    <property type="nucleotide sequence ID" value="NC_006348.1"/>
</dbReference>
<dbReference type="RefSeq" id="YP_102346.1">
    <property type="nucleotide sequence ID" value="NC_006348.1"/>
</dbReference>
<dbReference type="SMR" id="Q62LS3"/>
<dbReference type="GeneID" id="93061002"/>
<dbReference type="KEGG" id="bma:BMA0550"/>
<dbReference type="PATRIC" id="fig|243160.12.peg.564"/>
<dbReference type="eggNOG" id="COG0231">
    <property type="taxonomic scope" value="Bacteria"/>
</dbReference>
<dbReference type="HOGENOM" id="CLU_074944_2_1_4"/>
<dbReference type="UniPathway" id="UPA00345"/>
<dbReference type="Proteomes" id="UP000006693">
    <property type="component" value="Chromosome 1"/>
</dbReference>
<dbReference type="GO" id="GO:0005737">
    <property type="term" value="C:cytoplasm"/>
    <property type="evidence" value="ECO:0007669"/>
    <property type="project" value="UniProtKB-SubCell"/>
</dbReference>
<dbReference type="GO" id="GO:0003746">
    <property type="term" value="F:translation elongation factor activity"/>
    <property type="evidence" value="ECO:0007669"/>
    <property type="project" value="UniProtKB-UniRule"/>
</dbReference>
<dbReference type="GO" id="GO:0043043">
    <property type="term" value="P:peptide biosynthetic process"/>
    <property type="evidence" value="ECO:0007669"/>
    <property type="project" value="InterPro"/>
</dbReference>
<dbReference type="CDD" id="cd04470">
    <property type="entry name" value="S1_EF-P_repeat_1"/>
    <property type="match status" value="1"/>
</dbReference>
<dbReference type="CDD" id="cd05794">
    <property type="entry name" value="S1_EF-P_repeat_2"/>
    <property type="match status" value="1"/>
</dbReference>
<dbReference type="FunFam" id="2.30.30.30:FF:000003">
    <property type="entry name" value="Elongation factor P"/>
    <property type="match status" value="1"/>
</dbReference>
<dbReference type="FunFam" id="2.40.50.140:FF:000004">
    <property type="entry name" value="Elongation factor P"/>
    <property type="match status" value="1"/>
</dbReference>
<dbReference type="FunFam" id="2.40.50.140:FF:000009">
    <property type="entry name" value="Elongation factor P"/>
    <property type="match status" value="1"/>
</dbReference>
<dbReference type="Gene3D" id="2.30.30.30">
    <property type="match status" value="1"/>
</dbReference>
<dbReference type="Gene3D" id="2.40.50.140">
    <property type="entry name" value="Nucleic acid-binding proteins"/>
    <property type="match status" value="2"/>
</dbReference>
<dbReference type="HAMAP" id="MF_00141">
    <property type="entry name" value="EF_P"/>
    <property type="match status" value="1"/>
</dbReference>
<dbReference type="InterPro" id="IPR015365">
    <property type="entry name" value="Elong-fact-P_C"/>
</dbReference>
<dbReference type="InterPro" id="IPR012340">
    <property type="entry name" value="NA-bd_OB-fold"/>
</dbReference>
<dbReference type="InterPro" id="IPR014722">
    <property type="entry name" value="Rib_uL2_dom2"/>
</dbReference>
<dbReference type="InterPro" id="IPR020599">
    <property type="entry name" value="Transl_elong_fac_P/YeiP"/>
</dbReference>
<dbReference type="InterPro" id="IPR013185">
    <property type="entry name" value="Transl_elong_KOW-like"/>
</dbReference>
<dbReference type="InterPro" id="IPR001059">
    <property type="entry name" value="Transl_elong_P/YeiP_cen"/>
</dbReference>
<dbReference type="InterPro" id="IPR013852">
    <property type="entry name" value="Transl_elong_P/YeiP_CS"/>
</dbReference>
<dbReference type="InterPro" id="IPR011768">
    <property type="entry name" value="Transl_elongation_fac_P"/>
</dbReference>
<dbReference type="InterPro" id="IPR008991">
    <property type="entry name" value="Translation_prot_SH3-like_sf"/>
</dbReference>
<dbReference type="NCBIfam" id="TIGR00038">
    <property type="entry name" value="efp"/>
    <property type="match status" value="1"/>
</dbReference>
<dbReference type="NCBIfam" id="NF001810">
    <property type="entry name" value="PRK00529.1"/>
    <property type="match status" value="1"/>
</dbReference>
<dbReference type="PANTHER" id="PTHR30053">
    <property type="entry name" value="ELONGATION FACTOR P"/>
    <property type="match status" value="1"/>
</dbReference>
<dbReference type="PANTHER" id="PTHR30053:SF12">
    <property type="entry name" value="ELONGATION FACTOR P (EF-P) FAMILY PROTEIN"/>
    <property type="match status" value="1"/>
</dbReference>
<dbReference type="Pfam" id="PF01132">
    <property type="entry name" value="EFP"/>
    <property type="match status" value="1"/>
</dbReference>
<dbReference type="Pfam" id="PF08207">
    <property type="entry name" value="EFP_N"/>
    <property type="match status" value="1"/>
</dbReference>
<dbReference type="Pfam" id="PF09285">
    <property type="entry name" value="Elong-fact-P_C"/>
    <property type="match status" value="1"/>
</dbReference>
<dbReference type="PIRSF" id="PIRSF005901">
    <property type="entry name" value="EF-P"/>
    <property type="match status" value="1"/>
</dbReference>
<dbReference type="SMART" id="SM01185">
    <property type="entry name" value="EFP"/>
    <property type="match status" value="1"/>
</dbReference>
<dbReference type="SMART" id="SM00841">
    <property type="entry name" value="Elong-fact-P_C"/>
    <property type="match status" value="1"/>
</dbReference>
<dbReference type="SUPFAM" id="SSF50249">
    <property type="entry name" value="Nucleic acid-binding proteins"/>
    <property type="match status" value="2"/>
</dbReference>
<dbReference type="SUPFAM" id="SSF50104">
    <property type="entry name" value="Translation proteins SH3-like domain"/>
    <property type="match status" value="1"/>
</dbReference>
<dbReference type="PROSITE" id="PS01275">
    <property type="entry name" value="EFP"/>
    <property type="match status" value="1"/>
</dbReference>
<protein>
    <recommendedName>
        <fullName evidence="1">Elongation factor P</fullName>
        <shortName evidence="1">EF-P</shortName>
    </recommendedName>
</protein>
<keyword id="KW-0963">Cytoplasm</keyword>
<keyword id="KW-0251">Elongation factor</keyword>
<keyword id="KW-0648">Protein biosynthesis</keyword>
<keyword id="KW-1185">Reference proteome</keyword>
<name>EFP_BURMA</name>
<sequence length="185" mass="20792">MKTAQELRVGNVVMIGNDAWVVSKTEYNKSGRNAAVVKMKLKNLLNGGGQESVYKADDKFEVVVLDRKEVTYSYFADPMYVFMDADYNQYEVEAEMMGDALNYLEDGMACEVVFYNEKAISVELPTILVREITYTEPAVKGDTSSGKVLKNAKLATGFELQVPLFCNTGDKIEIDTRTNEYRSRA</sequence>
<reference key="1">
    <citation type="journal article" date="2004" name="Proc. Natl. Acad. Sci. U.S.A.">
        <title>Structural flexibility in the Burkholderia mallei genome.</title>
        <authorList>
            <person name="Nierman W.C."/>
            <person name="DeShazer D."/>
            <person name="Kim H.S."/>
            <person name="Tettelin H."/>
            <person name="Nelson K.E."/>
            <person name="Feldblyum T.V."/>
            <person name="Ulrich R.L."/>
            <person name="Ronning C.M."/>
            <person name="Brinkac L.M."/>
            <person name="Daugherty S.C."/>
            <person name="Davidsen T.D."/>
            <person name="DeBoy R.T."/>
            <person name="Dimitrov G."/>
            <person name="Dodson R.J."/>
            <person name="Durkin A.S."/>
            <person name="Gwinn M.L."/>
            <person name="Haft D.H."/>
            <person name="Khouri H.M."/>
            <person name="Kolonay J.F."/>
            <person name="Madupu R."/>
            <person name="Mohammoud Y."/>
            <person name="Nelson W.C."/>
            <person name="Radune D."/>
            <person name="Romero C.M."/>
            <person name="Sarria S."/>
            <person name="Selengut J."/>
            <person name="Shamblin C."/>
            <person name="Sullivan S.A."/>
            <person name="White O."/>
            <person name="Yu Y."/>
            <person name="Zafar N."/>
            <person name="Zhou L."/>
            <person name="Fraser C.M."/>
        </authorList>
    </citation>
    <scope>NUCLEOTIDE SEQUENCE [LARGE SCALE GENOMIC DNA]</scope>
    <source>
        <strain>ATCC 23344</strain>
    </source>
</reference>
<comment type="function">
    <text evidence="1">Involved in peptide bond synthesis. Stimulates efficient translation and peptide-bond synthesis on native or reconstituted 70S ribosomes in vitro. Probably functions indirectly by altering the affinity of the ribosome for aminoacyl-tRNA, thus increasing their reactivity as acceptors for peptidyl transferase.</text>
</comment>
<comment type="pathway">
    <text evidence="1">Protein biosynthesis; polypeptide chain elongation.</text>
</comment>
<comment type="subcellular location">
    <subcellularLocation>
        <location evidence="1">Cytoplasm</location>
    </subcellularLocation>
</comment>
<comment type="similarity">
    <text evidence="1">Belongs to the elongation factor P family.</text>
</comment>
<gene>
    <name evidence="1" type="primary">efp</name>
    <name type="ordered locus">BMA0550</name>
</gene>
<feature type="chain" id="PRO_0000094219" description="Elongation factor P">
    <location>
        <begin position="1"/>
        <end position="185"/>
    </location>
</feature>
<proteinExistence type="inferred from homology"/>
<accession>Q62LS3</accession>
<evidence type="ECO:0000255" key="1">
    <source>
        <dbReference type="HAMAP-Rule" id="MF_00141"/>
    </source>
</evidence>